<name>MOE2_CAEEL</name>
<reference evidence="18" key="1">
    <citation type="journal article" date="1998" name="Science">
        <title>Genome sequence of the nematode C. elegans: a platform for investigating biology.</title>
        <authorList>
            <consortium name="The C. elegans sequencing consortium"/>
        </authorList>
    </citation>
    <scope>NUCLEOTIDE SEQUENCE [LARGE SCALE GENOMIC DNA]</scope>
    <source>
        <strain evidence="18">Bristol N2</strain>
    </source>
</reference>
<reference evidence="15" key="2">
    <citation type="journal article" date="2001" name="Dev. Cell">
        <title>Two zinc finger proteins, OMA-1 and OMA-2, are redundantly required for oocyte maturation in C. elegans.</title>
        <authorList>
            <person name="Detwiler M.R."/>
            <person name="Reuben M."/>
            <person name="Li X."/>
            <person name="Rogers E."/>
            <person name="Lin R."/>
        </authorList>
    </citation>
    <scope>FUNCTION</scope>
    <scope>SUBCELLULAR LOCATION</scope>
    <scope>TISSUE SPECIFICITY</scope>
    <scope>DEVELOPMENTAL STAGE</scope>
    <scope>DISRUPTION PHENOTYPE</scope>
    <scope>MUTAGENESIS OF CYS-162</scope>
</reference>
<reference evidence="15" key="3">
    <citation type="journal article" date="2002" name="Genes Cells">
        <title>Novel family of CCCH-type zinc-finger proteins, MOE-1, -2 and -3, participates in C. elegans oocyte maturation.</title>
        <authorList>
            <person name="Shimada M."/>
            <person name="Kawahara H."/>
            <person name="Doi H."/>
        </authorList>
    </citation>
    <scope>FUNCTION</scope>
    <scope>SUBCELLULAR LOCATION</scope>
    <scope>TISSUE SPECIFICITY</scope>
    <scope>DEVELOPMENTAL STAGE</scope>
    <scope>DISRUPTION PHENOTYPE</scope>
</reference>
<reference evidence="15" key="4">
    <citation type="journal article" date="2003" name="Dev. Biol.">
        <title>A gain-of-function mutation in oma-1, a C. elegans gene required for oocyte maturation, results in delayed degradation of maternal proteins and embryonic lethality.</title>
        <authorList>
            <person name="Lin R."/>
        </authorList>
    </citation>
    <scope>FUNCTION</scope>
    <scope>DEVELOPMENTAL STAGE</scope>
</reference>
<reference evidence="15" key="5">
    <citation type="journal article" date="2005" name="Dev. Biol.">
        <title>DYRK2 and GSK-3 phosphorylate and promote the timely degradation of OMA-1, a key regulator of the oocyte-to-embryo transition in C. elegans.</title>
        <authorList>
            <person name="Nishi Y."/>
            <person name="Lin R."/>
        </authorList>
    </citation>
    <scope>FUNCTION</scope>
    <scope>PHOSPHORYLATION AT THR-327</scope>
    <scope>MUTAGENESIS OF THR-327</scope>
</reference>
<reference evidence="15" key="6">
    <citation type="journal article" date="2006" name="Genes Cells">
        <title>OMA-1 is a P granules-associated protein that is required for germline specification in Caenorhabditis elegans embryos.</title>
        <authorList>
            <person name="Shimada M."/>
            <person name="Yokosawa H."/>
            <person name="Kawahara H."/>
        </authorList>
    </citation>
    <scope>FUNCTION</scope>
    <scope>SUBCELLULAR LOCATION</scope>
    <scope>DEVELOPMENTAL STAGE</scope>
    <scope>DISRUPTION PHENOTYPE</scope>
</reference>
<reference evidence="15" key="7">
    <citation type="journal article" date="2008" name="Cell">
        <title>Global transcriptional repression in C. elegans germline precursors by regulated sequestration of TAF-4.</title>
        <authorList>
            <person name="Guven-Ozkan T."/>
            <person name="Nishi Y."/>
            <person name="Robertson S.M."/>
            <person name="Lin R."/>
        </authorList>
    </citation>
    <scope>FUNCTION</scope>
    <scope>DISRUPTION PHENOTYPE</scope>
</reference>
<reference evidence="15" key="8">
    <citation type="journal article" date="2008" name="Development">
        <title>Multiple maternal proteins coordinate to restrict the translation of C. elegans nanos-2 to primordial germ cells.</title>
        <authorList>
            <person name="Jadhav S."/>
            <person name="Rana M."/>
            <person name="Subramaniam K."/>
        </authorList>
    </citation>
    <scope>FUNCTION</scope>
    <scope>DISRUPTION PHENOTYPE</scope>
</reference>
<reference evidence="15" key="9">
    <citation type="journal article" date="2009" name="J. Cell Biol.">
        <title>An eIF4E-binding protein regulates katanin protein levels in C. elegans embryos.</title>
        <authorList>
            <person name="Li W."/>
            <person name="DeBella L.R."/>
            <person name="Guven-Ozkan T."/>
            <person name="Lin R."/>
            <person name="Rose L.S."/>
        </authorList>
    </citation>
    <scope>FUNCTION</scope>
    <scope>DISRUPTION PHENOTYPE</scope>
</reference>
<reference evidence="15" key="10">
    <citation type="journal article" date="2010" name="Development">
        <title>zif-1 translational repression defines a second, mutually exclusive OMA function in germline transcriptional repression.</title>
        <authorList>
            <person name="Guven-Ozkan T."/>
            <person name="Robertson S.M."/>
            <person name="Nishi Y."/>
            <person name="Lin R."/>
        </authorList>
    </citation>
    <scope>FUNCTION</scope>
    <scope>DISRUPTION PHENOTYPE</scope>
</reference>
<reference evidence="15" key="11">
    <citation type="journal article" date="2014" name="Genetics">
        <title>Translational control of the oogenic program by components of OMA ribonucleoprotein particles in Caenorhabditis elegans.</title>
        <authorList>
            <person name="Spike C.A."/>
            <person name="Coetzee D."/>
            <person name="Nishi Y."/>
            <person name="Guven-Ozkan T."/>
            <person name="Oldenbroek M."/>
            <person name="Yamamoto I."/>
            <person name="Lin R."/>
            <person name="Greenstein D."/>
        </authorList>
    </citation>
    <scope>FUNCTION</scope>
    <scope>DISRUPTION PHENOTYPE</scope>
</reference>
<keyword id="KW-0963">Cytoplasm</keyword>
<keyword id="KW-0206">Cytoskeleton</keyword>
<keyword id="KW-0479">Metal-binding</keyword>
<keyword id="KW-0597">Phosphoprotein</keyword>
<keyword id="KW-1185">Reference proteome</keyword>
<keyword id="KW-0677">Repeat</keyword>
<keyword id="KW-0678">Repressor</keyword>
<keyword id="KW-0687">Ribonucleoprotein</keyword>
<keyword id="KW-0694">RNA-binding</keyword>
<keyword id="KW-0810">Translation regulation</keyword>
<keyword id="KW-0862">Zinc</keyword>
<keyword id="KW-0863">Zinc-finger</keyword>
<protein>
    <recommendedName>
        <fullName evidence="15">CCCH-type zinc finger protein oma-2</fullName>
    </recommendedName>
    <alternativeName>
        <fullName evidence="14">Maturation oocyte expansion protein 2</fullName>
    </alternativeName>
    <alternativeName>
        <fullName evidence="13">Oocyte maturation defective protein 2</fullName>
    </alternativeName>
</protein>
<organism evidence="18">
    <name type="scientific">Caenorhabditis elegans</name>
    <dbReference type="NCBI Taxonomy" id="6239"/>
    <lineage>
        <taxon>Eukaryota</taxon>
        <taxon>Metazoa</taxon>
        <taxon>Ecdysozoa</taxon>
        <taxon>Nematoda</taxon>
        <taxon>Chromadorea</taxon>
        <taxon>Rhabditida</taxon>
        <taxon>Rhabditina</taxon>
        <taxon>Rhabditomorpha</taxon>
        <taxon>Rhabditoidea</taxon>
        <taxon>Rhabditidae</taxon>
        <taxon>Peloderinae</taxon>
        <taxon>Caenorhabditis</taxon>
    </lineage>
</organism>
<evidence type="ECO:0000255" key="1">
    <source>
        <dbReference type="PROSITE-ProRule" id="PRU00723"/>
    </source>
</evidence>
<evidence type="ECO:0000256" key="2">
    <source>
        <dbReference type="SAM" id="MobiDB-lite"/>
    </source>
</evidence>
<evidence type="ECO:0000269" key="3">
    <source>
    </source>
</evidence>
<evidence type="ECO:0000269" key="4">
    <source>
    </source>
</evidence>
<evidence type="ECO:0000269" key="5">
    <source>
    </source>
</evidence>
<evidence type="ECO:0000269" key="6">
    <source>
    </source>
</evidence>
<evidence type="ECO:0000269" key="7">
    <source>
    </source>
</evidence>
<evidence type="ECO:0000269" key="8">
    <source>
    </source>
</evidence>
<evidence type="ECO:0000269" key="9">
    <source>
    </source>
</evidence>
<evidence type="ECO:0000269" key="10">
    <source>
    </source>
</evidence>
<evidence type="ECO:0000269" key="11">
    <source>
    </source>
</evidence>
<evidence type="ECO:0000269" key="12">
    <source>
    </source>
</evidence>
<evidence type="ECO:0000303" key="13">
    <source>
    </source>
</evidence>
<evidence type="ECO:0000303" key="14">
    <source>
    </source>
</evidence>
<evidence type="ECO:0000305" key="15"/>
<evidence type="ECO:0000305" key="16">
    <source>
    </source>
</evidence>
<evidence type="ECO:0000305" key="17">
    <source>
    </source>
</evidence>
<evidence type="ECO:0000312" key="18">
    <source>
        <dbReference type="Proteomes" id="UP000001940"/>
    </source>
</evidence>
<evidence type="ECO:0000312" key="19">
    <source>
        <dbReference type="WormBase" id="ZC513.6"/>
    </source>
</evidence>
<proteinExistence type="evidence at protein level"/>
<comment type="function">
    <text evidence="3 4 6 7 8 9 10 17">Zinc-finger RNA-binding protein that binds to 5'-UA[AU]-3' motifs in the 3'-UTR of maternal mRNAs to suppress translation in oocytes and embryos (PubMed:18417623). Acts redundantly with oma-1 to control the temporal expression and distribution of maternal proteins and thereby promote meiotic progression, oocyte maturation, fertilization and embryonic development (PubMed:11702779, PubMed:12296824, PubMed:12781695, PubMed:16289132, PubMed:16611242, PubMed:18417623, PubMed:18854162, PubMed:19786575, PubMed:20826530, PubMed:25261697). Also, together with oma-1, is involved in P-granule distribution during embryonic development (PubMed:16611242).</text>
</comment>
<comment type="subcellular location">
    <subcellularLocation>
        <location evidence="3 4 7">Cytoplasm</location>
    </subcellularLocation>
    <subcellularLocation>
        <location evidence="4">Cytoplasmic granule</location>
    </subcellularLocation>
    <subcellularLocation>
        <location evidence="4">Cytoplasm</location>
        <location evidence="4">Cytoskeleton</location>
        <location evidence="4">Microtubule organizing center</location>
        <location evidence="4">Centrosome</location>
    </subcellularLocation>
    <text evidence="4">Expressed in cytoplasmic P-granules following fertilization and in developing oocytes. Expression ceases in P-granules in 2-cell stage embryos. Expressed in the centrosome after the 2-cell stage of embryogenesis, during the early cleavage stage, and also at later blastula stages.</text>
</comment>
<comment type="tissue specificity">
    <text evidence="3 4">Exclusively expressed in the hermaphrodite gonad (PubMed:11702779, PubMed:12296824). Expression only in cellulized oocytes (PubMed:11702779). Widely distributed throughout gonadal oocytes from the mitotic stage to the developing diakinesis stage (PubMed:12296824).</text>
</comment>
<comment type="developmental stage">
    <text evidence="3 4 5 7">Expressed in newly fertilized embryos, but is rapidly degraded after initiation of the first mitotic division (PubMed:12296824, PubMed:12781695, PubMed:16611242). Weak, if any, expression during larval stages (PubMed:11702779).</text>
</comment>
<comment type="disruption phenotype">
    <text evidence="3 4 7 8 9 10 11 12">No visible phenotype (PubMed:12296824). Double knockout with oma-1 results in sterility due to an oocyte maturation defect (PubMed:11702779). The oocyte maturation defect is due to a meiotic defect in oocytes in which the maturation process is initiated, but there is no progression beyond the prophase stage of meiosis and therefore the cell division process is not completed (PubMed:11702779). Animals also have a larger number of oocytes which are larger in size, but the oocytes cannot be fertilized and accumulate within the gonad (PubMed:11702779). Double RNAi-mediated knockdown with oma-1 in embryos results in more widely distributed P-granules compared to wild-type embryos, and an irregular distribution of germline proteins including pgl-1, mex-1 and pie-1 (PubMed:16611242). Double RNAi-mediated knockdown with oma-1 in larva at the L4 stage of development results in 93% embryonic lethality following the first mitotic cleavage in offspring (PubMed:16611242). Double RNAi-mediated knockdown with oma-1 in adults results in a 60% reduction in number of eggs laid (PubMed:12296824). These animals also have an expanded proximal gonad arm which contains larger number of proximal oocytes which in turn contain a larger number of germinal vesicles and higher expression of maternal mRNAs including nos-2 (PubMed:12296824, PubMed:18417623). Furthermore, after the diakinesis stage following meiosis I, the germinal vesicles have dispersed chromosomes and an abnormal distribution of P-granules (PubMed:12296824). Embryos also display cell division (PubMed:19786575, PubMed:20826530). In addition, there is increased expression of target transcripts such as taf-4 and mei-1 which also exhibit an altered localization in oocytes and embryos (PubMed:18854162, PubMed:19786575, PubMed:25261697). Reduced expression of the maternal transcriptional repressor protein pie-1 (PubMed:20826530). Triple RNAi-mediated knockdown with oma-1 and moe-3 results in a 85% reduction in number of eggs laid (PubMed:12296824).</text>
</comment>
<gene>
    <name evidence="13 19" type="primary">oma-2</name>
    <name evidence="14 19" type="synonym">moe-2</name>
    <name evidence="19" type="ORF">ZC513.6</name>
</gene>
<dbReference type="EMBL" id="BX284605">
    <property type="protein sequence ID" value="CCD64069.1"/>
    <property type="molecule type" value="Genomic_DNA"/>
</dbReference>
<dbReference type="PIR" id="T28994">
    <property type="entry name" value="T28994"/>
</dbReference>
<dbReference type="RefSeq" id="NP_505069.1">
    <property type="nucleotide sequence ID" value="NM_072668.9"/>
</dbReference>
<dbReference type="DIP" id="DIP-26006N"/>
<dbReference type="FunCoup" id="Q23359">
    <property type="interactions" value="64"/>
</dbReference>
<dbReference type="IntAct" id="Q23359">
    <property type="interactions" value="19"/>
</dbReference>
<dbReference type="STRING" id="6239.ZC513.6.1"/>
<dbReference type="iPTMnet" id="Q23359"/>
<dbReference type="PaxDb" id="6239-ZC513.6"/>
<dbReference type="PeptideAtlas" id="Q23359"/>
<dbReference type="EnsemblMetazoa" id="ZC513.6.1">
    <property type="protein sequence ID" value="ZC513.6.1"/>
    <property type="gene ID" value="WBGene00003865"/>
</dbReference>
<dbReference type="GeneID" id="179183"/>
<dbReference type="KEGG" id="cel:CELE_ZC513.6"/>
<dbReference type="UCSC" id="ZC513.6">
    <property type="organism name" value="c. elegans"/>
</dbReference>
<dbReference type="AGR" id="WB:WBGene00003865"/>
<dbReference type="CTD" id="179183"/>
<dbReference type="WormBase" id="ZC513.6">
    <property type="protein sequence ID" value="CE07613"/>
    <property type="gene ID" value="WBGene00003865"/>
    <property type="gene designation" value="oma-2"/>
</dbReference>
<dbReference type="eggNOG" id="KOG1677">
    <property type="taxonomic scope" value="Eukaryota"/>
</dbReference>
<dbReference type="GeneTree" id="ENSGT00970000196212"/>
<dbReference type="HOGENOM" id="CLU_062303_0_0_1"/>
<dbReference type="InParanoid" id="Q23359"/>
<dbReference type="OMA" id="EQHIMTG"/>
<dbReference type="OrthoDB" id="410307at2759"/>
<dbReference type="PhylomeDB" id="Q23359"/>
<dbReference type="Reactome" id="R-CEL-450385">
    <property type="pathway name" value="Butyrate Response Factor 1 (BRF1) binds and destabilizes mRNA"/>
</dbReference>
<dbReference type="Reactome" id="R-CEL-450513">
    <property type="pathway name" value="Tristetraprolin (TTP, ZFP36) binds and destabilizes mRNA"/>
</dbReference>
<dbReference type="SignaLink" id="Q23359"/>
<dbReference type="CD-CODE" id="73A75392">
    <property type="entry name" value="P-granule"/>
</dbReference>
<dbReference type="PRO" id="PR:Q23359"/>
<dbReference type="Proteomes" id="UP000001940">
    <property type="component" value="Chromosome V"/>
</dbReference>
<dbReference type="Bgee" id="WBGene00003865">
    <property type="expression patterns" value="Expressed in germ line (C elegans) and 4 other cell types or tissues"/>
</dbReference>
<dbReference type="GO" id="GO:0005813">
    <property type="term" value="C:centrosome"/>
    <property type="evidence" value="ECO:0000314"/>
    <property type="project" value="WormBase"/>
</dbReference>
<dbReference type="GO" id="GO:0005737">
    <property type="term" value="C:cytoplasm"/>
    <property type="evidence" value="ECO:0000314"/>
    <property type="project" value="WormBase"/>
</dbReference>
<dbReference type="GO" id="GO:0005829">
    <property type="term" value="C:cytosol"/>
    <property type="evidence" value="ECO:0000318"/>
    <property type="project" value="GO_Central"/>
</dbReference>
<dbReference type="GO" id="GO:0043186">
    <property type="term" value="C:P granule"/>
    <property type="evidence" value="ECO:0000314"/>
    <property type="project" value="WormBase"/>
</dbReference>
<dbReference type="GO" id="GO:1990904">
    <property type="term" value="C:ribonucleoprotein complex"/>
    <property type="evidence" value="ECO:0007669"/>
    <property type="project" value="UniProtKB-KW"/>
</dbReference>
<dbReference type="GO" id="GO:0003730">
    <property type="term" value="F:mRNA 3'-UTR binding"/>
    <property type="evidence" value="ECO:0000318"/>
    <property type="project" value="GO_Central"/>
</dbReference>
<dbReference type="GO" id="GO:0000900">
    <property type="term" value="F:mRNA regulatory element binding translation repressor activity"/>
    <property type="evidence" value="ECO:0000316"/>
    <property type="project" value="UniProtKB"/>
</dbReference>
<dbReference type="GO" id="GO:0008270">
    <property type="term" value="F:zinc ion binding"/>
    <property type="evidence" value="ECO:0007669"/>
    <property type="project" value="UniProtKB-KW"/>
</dbReference>
<dbReference type="GO" id="GO:0051303">
    <property type="term" value="P:establishment of chromosome localization"/>
    <property type="evidence" value="ECO:0000316"/>
    <property type="project" value="UniProtKB"/>
</dbReference>
<dbReference type="GO" id="GO:0051078">
    <property type="term" value="P:meiotic nuclear membrane disassembly"/>
    <property type="evidence" value="ECO:0000316"/>
    <property type="project" value="UniProtKB"/>
</dbReference>
<dbReference type="GO" id="GO:1904145">
    <property type="term" value="P:negative regulation of meiotic cell cycle process involved in oocyte maturation"/>
    <property type="evidence" value="ECO:0000316"/>
    <property type="project" value="UniProtKB"/>
</dbReference>
<dbReference type="GO" id="GO:0060280">
    <property type="term" value="P:negative regulation of ovulation"/>
    <property type="evidence" value="ECO:0000316"/>
    <property type="project" value="UniProtKB"/>
</dbReference>
<dbReference type="GO" id="GO:0017148">
    <property type="term" value="P:negative regulation of translation"/>
    <property type="evidence" value="ECO:0000315"/>
    <property type="project" value="WormBase"/>
</dbReference>
<dbReference type="GO" id="GO:0001555">
    <property type="term" value="P:oocyte growth"/>
    <property type="evidence" value="ECO:0000316"/>
    <property type="project" value="UniProtKB"/>
</dbReference>
<dbReference type="GO" id="GO:0001556">
    <property type="term" value="P:oocyte maturation"/>
    <property type="evidence" value="ECO:0000316"/>
    <property type="project" value="WormBase"/>
</dbReference>
<dbReference type="GO" id="GO:0048601">
    <property type="term" value="P:oocyte morphogenesis"/>
    <property type="evidence" value="ECO:0000316"/>
    <property type="project" value="UniProtKB"/>
</dbReference>
<dbReference type="GO" id="GO:0040019">
    <property type="term" value="P:positive regulation of embryonic development"/>
    <property type="evidence" value="ECO:0000316"/>
    <property type="project" value="UniProtKB"/>
</dbReference>
<dbReference type="GO" id="GO:1905516">
    <property type="term" value="P:positive regulation of fertilization"/>
    <property type="evidence" value="ECO:0000316"/>
    <property type="project" value="UniProtKB"/>
</dbReference>
<dbReference type="GO" id="GO:0043406">
    <property type="term" value="P:positive regulation of MAP kinase activity"/>
    <property type="evidence" value="ECO:0000316"/>
    <property type="project" value="UniProtKB"/>
</dbReference>
<dbReference type="GO" id="GO:1904146">
    <property type="term" value="P:positive regulation of meiotic cell cycle process involved in oocyte maturation"/>
    <property type="evidence" value="ECO:0000316"/>
    <property type="project" value="UniProtKB"/>
</dbReference>
<dbReference type="GO" id="GO:0060282">
    <property type="term" value="P:positive regulation of oocyte development"/>
    <property type="evidence" value="ECO:0000316"/>
    <property type="project" value="UniProtKB"/>
</dbReference>
<dbReference type="GO" id="GO:1900195">
    <property type="term" value="P:positive regulation of oocyte maturation"/>
    <property type="evidence" value="ECO:0000316"/>
    <property type="project" value="UniProtKB"/>
</dbReference>
<dbReference type="GO" id="GO:0071168">
    <property type="term" value="P:protein localization to chromatin"/>
    <property type="evidence" value="ECO:0000316"/>
    <property type="project" value="UniProtKB"/>
</dbReference>
<dbReference type="FunFam" id="4.10.1000.10:FF:000001">
    <property type="entry name" value="zinc finger CCCH domain-containing protein 15-like"/>
    <property type="match status" value="1"/>
</dbReference>
<dbReference type="FunFam" id="4.10.1000.10:FF:000018">
    <property type="entry name" value="Zinc finger protein"/>
    <property type="match status" value="1"/>
</dbReference>
<dbReference type="Gene3D" id="4.10.1000.10">
    <property type="entry name" value="Zinc finger, CCCH-type"/>
    <property type="match status" value="2"/>
</dbReference>
<dbReference type="InterPro" id="IPR045877">
    <property type="entry name" value="ZFP36-like"/>
</dbReference>
<dbReference type="InterPro" id="IPR000571">
    <property type="entry name" value="Znf_CCCH"/>
</dbReference>
<dbReference type="InterPro" id="IPR036855">
    <property type="entry name" value="Znf_CCCH_sf"/>
</dbReference>
<dbReference type="PANTHER" id="PTHR12547">
    <property type="entry name" value="CCCH ZINC FINGER/TIS11-RELATED"/>
    <property type="match status" value="1"/>
</dbReference>
<dbReference type="PANTHER" id="PTHR12547:SF71">
    <property type="entry name" value="CCCH-TYPE ZINC FINGER PROTEIN MOE-3-RELATED"/>
    <property type="match status" value="1"/>
</dbReference>
<dbReference type="Pfam" id="PF00642">
    <property type="entry name" value="zf-CCCH"/>
    <property type="match status" value="2"/>
</dbReference>
<dbReference type="SMART" id="SM00356">
    <property type="entry name" value="ZnF_C3H1"/>
    <property type="match status" value="2"/>
</dbReference>
<dbReference type="SUPFAM" id="SSF90229">
    <property type="entry name" value="CCCH zinc finger"/>
    <property type="match status" value="2"/>
</dbReference>
<dbReference type="PROSITE" id="PS50103">
    <property type="entry name" value="ZF_C3H1"/>
    <property type="match status" value="2"/>
</dbReference>
<accession>Q23359</accession>
<sequence length="393" mass="43585">MDMLKENVIQNNEARTESSVEPSHPDMMETVPEEQQKPISHIDDLLSETANLMAVKEQLLKEIAENEHIHSMQMRALQNLPQEAILPLQYHADPRRRHRMQKPESYKTVICQAWLESKTCAFAENCRFAHGEEELRPSLIEARQNNKYRTKLCDKYTTTGLCPYGKRCLFIHPDNGPNAYIRADKLFEVSQRHALADLRDQMEHHIMNGGRSTAGPQQFDMFARPCTPDEPAANMPLGPTPVSIRGPRYELPSKKPLETEEAGNRPPSSWPLDPSTFFALDSLNMATRPISPFESMLIGAAGNMQYSMLGKQSTPGGVSGYSSSGSTPSQDSDSSPLTAASAAADAACQANSESAQSILLKSINNPMIGNETTLPIPGLDQLAMDIAKHLELW</sequence>
<feature type="chain" id="PRO_0000438917" description="CCCH-type zinc finger protein oma-2" evidence="15">
    <location>
        <begin position="1"/>
        <end position="393"/>
    </location>
</feature>
<feature type="zinc finger region" description="C3H1-type 1" evidence="1">
    <location>
        <begin position="105"/>
        <end position="133"/>
    </location>
</feature>
<feature type="zinc finger region" description="C3H1-type 2" evidence="1">
    <location>
        <begin position="147"/>
        <end position="175"/>
    </location>
</feature>
<feature type="region of interest" description="Disordered" evidence="2">
    <location>
        <begin position="1"/>
        <end position="26"/>
    </location>
</feature>
<feature type="region of interest" description="Disordered" evidence="2">
    <location>
        <begin position="227"/>
        <end position="251"/>
    </location>
</feature>
<feature type="region of interest" description="Disordered" evidence="2">
    <location>
        <begin position="311"/>
        <end position="340"/>
    </location>
</feature>
<feature type="compositionally biased region" description="Basic and acidic residues" evidence="2">
    <location>
        <begin position="14"/>
        <end position="26"/>
    </location>
</feature>
<feature type="compositionally biased region" description="Low complexity" evidence="2">
    <location>
        <begin position="313"/>
        <end position="340"/>
    </location>
</feature>
<feature type="modified residue" description="Phosphothreonine; by GSK3" evidence="16">
    <location>
        <position position="327"/>
    </location>
</feature>
<feature type="mutagenesis site" description="In te50; sterile." evidence="3">
    <original>C</original>
    <variation>Y</variation>
    <location>
        <position position="162"/>
    </location>
</feature>
<feature type="mutagenesis site" description="Reduced phosphorylation by GSK3." evidence="6">
    <original>T</original>
    <variation>A</variation>
    <location>
        <position position="327"/>
    </location>
</feature>